<comment type="similarity">
    <text evidence="1">Belongs to the UPF0178 family.</text>
</comment>
<evidence type="ECO:0000255" key="1">
    <source>
        <dbReference type="HAMAP-Rule" id="MF_00489"/>
    </source>
</evidence>
<protein>
    <recommendedName>
        <fullName evidence="1">UPF0178 protein Maqu_2186</fullName>
    </recommendedName>
</protein>
<name>Y2186_MARN8</name>
<organism>
    <name type="scientific">Marinobacter nauticus (strain ATCC 700491 / DSM 11845 / VT8)</name>
    <name type="common">Marinobacter aquaeolei</name>
    <dbReference type="NCBI Taxonomy" id="351348"/>
    <lineage>
        <taxon>Bacteria</taxon>
        <taxon>Pseudomonadati</taxon>
        <taxon>Pseudomonadota</taxon>
        <taxon>Gammaproteobacteria</taxon>
        <taxon>Pseudomonadales</taxon>
        <taxon>Marinobacteraceae</taxon>
        <taxon>Marinobacter</taxon>
    </lineage>
</organism>
<accession>A1U2P6</accession>
<reference key="1">
    <citation type="journal article" date="2011" name="Appl. Environ. Microbiol.">
        <title>Genomic potential of Marinobacter aquaeolei, a biogeochemical 'opportunitroph'.</title>
        <authorList>
            <person name="Singer E."/>
            <person name="Webb E.A."/>
            <person name="Nelson W.C."/>
            <person name="Heidelberg J.F."/>
            <person name="Ivanova N."/>
            <person name="Pati A."/>
            <person name="Edwards K.J."/>
        </authorList>
    </citation>
    <scope>NUCLEOTIDE SEQUENCE [LARGE SCALE GENOMIC DNA]</scope>
    <source>
        <strain>ATCC 700491 / DSM 11845 / VT8</strain>
    </source>
</reference>
<feature type="chain" id="PRO_1000014426" description="UPF0178 protein Maqu_2186">
    <location>
        <begin position="1"/>
        <end position="150"/>
    </location>
</feature>
<dbReference type="EMBL" id="CP000514">
    <property type="protein sequence ID" value="ABM19265.1"/>
    <property type="molecule type" value="Genomic_DNA"/>
</dbReference>
<dbReference type="RefSeq" id="WP_011785656.1">
    <property type="nucleotide sequence ID" value="NC_008740.1"/>
</dbReference>
<dbReference type="STRING" id="351348.Maqu_2186"/>
<dbReference type="KEGG" id="maq:Maqu_2186"/>
<dbReference type="eggNOG" id="COG1671">
    <property type="taxonomic scope" value="Bacteria"/>
</dbReference>
<dbReference type="HOGENOM" id="CLU_106619_2_1_6"/>
<dbReference type="OrthoDB" id="9798918at2"/>
<dbReference type="Proteomes" id="UP000000998">
    <property type="component" value="Chromosome"/>
</dbReference>
<dbReference type="CDD" id="cd18720">
    <property type="entry name" value="PIN_YqxD-like"/>
    <property type="match status" value="1"/>
</dbReference>
<dbReference type="HAMAP" id="MF_00489">
    <property type="entry name" value="UPF0178"/>
    <property type="match status" value="1"/>
</dbReference>
<dbReference type="InterPro" id="IPR003791">
    <property type="entry name" value="UPF0178"/>
</dbReference>
<dbReference type="NCBIfam" id="NF001095">
    <property type="entry name" value="PRK00124.1"/>
    <property type="match status" value="1"/>
</dbReference>
<dbReference type="PANTHER" id="PTHR35146">
    <property type="entry name" value="UPF0178 PROTEIN YAII"/>
    <property type="match status" value="1"/>
</dbReference>
<dbReference type="PANTHER" id="PTHR35146:SF1">
    <property type="entry name" value="UPF0178 PROTEIN YAII"/>
    <property type="match status" value="1"/>
</dbReference>
<dbReference type="Pfam" id="PF02639">
    <property type="entry name" value="DUF188"/>
    <property type="match status" value="1"/>
</dbReference>
<proteinExistence type="inferred from homology"/>
<sequence>MPIWVDADACPVPIREILCRAATRWQIQTTFIANHAISLPPSPHISRRQVPHGFDVADNEIMDQMSKGDLVITQDIPLAAEAIEKGADVFNPRGQAFTKENIRQRLAMRNFMEEMRNAGQVTGGPAPFSQGDRKEFADQLDRWLQRNARK</sequence>
<gene>
    <name type="ordered locus">Maqu_2186</name>
</gene>